<reference key="1">
    <citation type="submission" date="2006-12" db="EMBL/GenBank/DDBJ databases">
        <title>Complete sequence of chromosome 1 of Acidovorax sp. JS42.</title>
        <authorList>
            <person name="Copeland A."/>
            <person name="Lucas S."/>
            <person name="Lapidus A."/>
            <person name="Barry K."/>
            <person name="Detter J.C."/>
            <person name="Glavina del Rio T."/>
            <person name="Dalin E."/>
            <person name="Tice H."/>
            <person name="Pitluck S."/>
            <person name="Chertkov O."/>
            <person name="Brettin T."/>
            <person name="Bruce D."/>
            <person name="Han C."/>
            <person name="Tapia R."/>
            <person name="Gilna P."/>
            <person name="Schmutz J."/>
            <person name="Larimer F."/>
            <person name="Land M."/>
            <person name="Hauser L."/>
            <person name="Kyrpides N."/>
            <person name="Kim E."/>
            <person name="Stahl D."/>
            <person name="Richardson P."/>
        </authorList>
    </citation>
    <scope>NUCLEOTIDE SEQUENCE [LARGE SCALE GENOMIC DNA]</scope>
    <source>
        <strain>JS42</strain>
    </source>
</reference>
<protein>
    <recommendedName>
        <fullName evidence="1">Serine--tRNA ligase</fullName>
        <ecNumber evidence="1">6.1.1.11</ecNumber>
    </recommendedName>
    <alternativeName>
        <fullName evidence="1">Seryl-tRNA synthetase</fullName>
        <shortName evidence="1">SerRS</shortName>
    </alternativeName>
    <alternativeName>
        <fullName evidence="1">Seryl-tRNA(Ser/Sec) synthetase</fullName>
    </alternativeName>
</protein>
<name>SYS_ACISJ</name>
<proteinExistence type="inferred from homology"/>
<dbReference type="EC" id="6.1.1.11" evidence="1"/>
<dbReference type="EMBL" id="CP000539">
    <property type="protein sequence ID" value="ABM43559.1"/>
    <property type="molecule type" value="Genomic_DNA"/>
</dbReference>
<dbReference type="SMR" id="A1WBD4"/>
<dbReference type="STRING" id="232721.Ajs_3445"/>
<dbReference type="KEGG" id="ajs:Ajs_3445"/>
<dbReference type="eggNOG" id="COG0172">
    <property type="taxonomic scope" value="Bacteria"/>
</dbReference>
<dbReference type="HOGENOM" id="CLU_023797_0_1_4"/>
<dbReference type="UniPathway" id="UPA00906">
    <property type="reaction ID" value="UER00895"/>
</dbReference>
<dbReference type="Proteomes" id="UP000000645">
    <property type="component" value="Chromosome"/>
</dbReference>
<dbReference type="GO" id="GO:0005737">
    <property type="term" value="C:cytoplasm"/>
    <property type="evidence" value="ECO:0007669"/>
    <property type="project" value="UniProtKB-SubCell"/>
</dbReference>
<dbReference type="GO" id="GO:0005524">
    <property type="term" value="F:ATP binding"/>
    <property type="evidence" value="ECO:0007669"/>
    <property type="project" value="UniProtKB-UniRule"/>
</dbReference>
<dbReference type="GO" id="GO:0004828">
    <property type="term" value="F:serine-tRNA ligase activity"/>
    <property type="evidence" value="ECO:0007669"/>
    <property type="project" value="UniProtKB-UniRule"/>
</dbReference>
<dbReference type="GO" id="GO:0016260">
    <property type="term" value="P:selenocysteine biosynthetic process"/>
    <property type="evidence" value="ECO:0007669"/>
    <property type="project" value="UniProtKB-UniRule"/>
</dbReference>
<dbReference type="GO" id="GO:0006434">
    <property type="term" value="P:seryl-tRNA aminoacylation"/>
    <property type="evidence" value="ECO:0007669"/>
    <property type="project" value="UniProtKB-UniRule"/>
</dbReference>
<dbReference type="CDD" id="cd00770">
    <property type="entry name" value="SerRS_core"/>
    <property type="match status" value="1"/>
</dbReference>
<dbReference type="Gene3D" id="3.30.930.10">
    <property type="entry name" value="Bira Bifunctional Protein, Domain 2"/>
    <property type="match status" value="1"/>
</dbReference>
<dbReference type="Gene3D" id="1.10.287.40">
    <property type="entry name" value="Serine-tRNA synthetase, tRNA binding domain"/>
    <property type="match status" value="1"/>
</dbReference>
<dbReference type="HAMAP" id="MF_00176">
    <property type="entry name" value="Ser_tRNA_synth_type1"/>
    <property type="match status" value="1"/>
</dbReference>
<dbReference type="InterPro" id="IPR002314">
    <property type="entry name" value="aa-tRNA-synt_IIb"/>
</dbReference>
<dbReference type="InterPro" id="IPR006195">
    <property type="entry name" value="aa-tRNA-synth_II"/>
</dbReference>
<dbReference type="InterPro" id="IPR045864">
    <property type="entry name" value="aa-tRNA-synth_II/BPL/LPL"/>
</dbReference>
<dbReference type="InterPro" id="IPR002317">
    <property type="entry name" value="Ser-tRNA-ligase_type_1"/>
</dbReference>
<dbReference type="InterPro" id="IPR015866">
    <property type="entry name" value="Ser-tRNA-synth_1_N"/>
</dbReference>
<dbReference type="InterPro" id="IPR042103">
    <property type="entry name" value="SerRS_1_N_sf"/>
</dbReference>
<dbReference type="InterPro" id="IPR033729">
    <property type="entry name" value="SerRS_core"/>
</dbReference>
<dbReference type="InterPro" id="IPR010978">
    <property type="entry name" value="tRNA-bd_arm"/>
</dbReference>
<dbReference type="NCBIfam" id="TIGR00414">
    <property type="entry name" value="serS"/>
    <property type="match status" value="1"/>
</dbReference>
<dbReference type="PANTHER" id="PTHR43697:SF1">
    <property type="entry name" value="SERINE--TRNA LIGASE"/>
    <property type="match status" value="1"/>
</dbReference>
<dbReference type="PANTHER" id="PTHR43697">
    <property type="entry name" value="SERYL-TRNA SYNTHETASE"/>
    <property type="match status" value="1"/>
</dbReference>
<dbReference type="Pfam" id="PF02403">
    <property type="entry name" value="Seryl_tRNA_N"/>
    <property type="match status" value="1"/>
</dbReference>
<dbReference type="Pfam" id="PF00587">
    <property type="entry name" value="tRNA-synt_2b"/>
    <property type="match status" value="1"/>
</dbReference>
<dbReference type="PIRSF" id="PIRSF001529">
    <property type="entry name" value="Ser-tRNA-synth_IIa"/>
    <property type="match status" value="1"/>
</dbReference>
<dbReference type="PRINTS" id="PR00981">
    <property type="entry name" value="TRNASYNTHSER"/>
</dbReference>
<dbReference type="SUPFAM" id="SSF55681">
    <property type="entry name" value="Class II aaRS and biotin synthetases"/>
    <property type="match status" value="1"/>
</dbReference>
<dbReference type="SUPFAM" id="SSF46589">
    <property type="entry name" value="tRNA-binding arm"/>
    <property type="match status" value="1"/>
</dbReference>
<dbReference type="PROSITE" id="PS50862">
    <property type="entry name" value="AA_TRNA_LIGASE_II"/>
    <property type="match status" value="1"/>
</dbReference>
<sequence>MLDILLLRKDLASAVARLETRKKPQAFLNVEAFQALESERKTIQMRTEELQSQRNQLSKQIGMLMGKGEKDAAEAAKAQVAAIKAELDGSATRLDQIQGELQTMLAAVPNLPHESVPVGSDESANVEVRRWSPDGQQPRSLGFTPKDHVDLGEPLGLDFDMGVKLSGSRFTVMKGGIARLHRALAQFMLDVQTQEHGYTECYVPYVVNADSLKGTGQLPKFEGDLFAAQKGGQDAEPVPDNAQLYLIPTSEVPLTNFVRDEVLAEAQLPLKLTAHTPCFRSEAGSYGRDTRGMIRQHQFDKVEMVQIVHPDKSYEALEEMTRHAEAVLQKLGLPYRVMSLCTGDMGFGAAKTYDLEVWLPAQNTYREISSVSNCEAFQARRLQARFKNAQGKNELVHTLNGSGLAVGRTLVAVLENYQNEDGSVTIPEVLRPYMGGQATLSV</sequence>
<keyword id="KW-0030">Aminoacyl-tRNA synthetase</keyword>
<keyword id="KW-0067">ATP-binding</keyword>
<keyword id="KW-0963">Cytoplasm</keyword>
<keyword id="KW-0436">Ligase</keyword>
<keyword id="KW-0547">Nucleotide-binding</keyword>
<keyword id="KW-0648">Protein biosynthesis</keyword>
<accession>A1WBD4</accession>
<comment type="function">
    <text evidence="1">Catalyzes the attachment of serine to tRNA(Ser). Is also able to aminoacylate tRNA(Sec) with serine, to form the misacylated tRNA L-seryl-tRNA(Sec), which will be further converted into selenocysteinyl-tRNA(Sec).</text>
</comment>
<comment type="catalytic activity">
    <reaction evidence="1">
        <text>tRNA(Ser) + L-serine + ATP = L-seryl-tRNA(Ser) + AMP + diphosphate + H(+)</text>
        <dbReference type="Rhea" id="RHEA:12292"/>
        <dbReference type="Rhea" id="RHEA-COMP:9669"/>
        <dbReference type="Rhea" id="RHEA-COMP:9703"/>
        <dbReference type="ChEBI" id="CHEBI:15378"/>
        <dbReference type="ChEBI" id="CHEBI:30616"/>
        <dbReference type="ChEBI" id="CHEBI:33019"/>
        <dbReference type="ChEBI" id="CHEBI:33384"/>
        <dbReference type="ChEBI" id="CHEBI:78442"/>
        <dbReference type="ChEBI" id="CHEBI:78533"/>
        <dbReference type="ChEBI" id="CHEBI:456215"/>
        <dbReference type="EC" id="6.1.1.11"/>
    </reaction>
</comment>
<comment type="catalytic activity">
    <reaction evidence="1">
        <text>tRNA(Sec) + L-serine + ATP = L-seryl-tRNA(Sec) + AMP + diphosphate + H(+)</text>
        <dbReference type="Rhea" id="RHEA:42580"/>
        <dbReference type="Rhea" id="RHEA-COMP:9742"/>
        <dbReference type="Rhea" id="RHEA-COMP:10128"/>
        <dbReference type="ChEBI" id="CHEBI:15378"/>
        <dbReference type="ChEBI" id="CHEBI:30616"/>
        <dbReference type="ChEBI" id="CHEBI:33019"/>
        <dbReference type="ChEBI" id="CHEBI:33384"/>
        <dbReference type="ChEBI" id="CHEBI:78442"/>
        <dbReference type="ChEBI" id="CHEBI:78533"/>
        <dbReference type="ChEBI" id="CHEBI:456215"/>
        <dbReference type="EC" id="6.1.1.11"/>
    </reaction>
</comment>
<comment type="pathway">
    <text evidence="1">Aminoacyl-tRNA biosynthesis; selenocysteinyl-tRNA(Sec) biosynthesis; L-seryl-tRNA(Sec) from L-serine and tRNA(Sec): step 1/1.</text>
</comment>
<comment type="subunit">
    <text evidence="1">Homodimer. The tRNA molecule binds across the dimer.</text>
</comment>
<comment type="subcellular location">
    <subcellularLocation>
        <location evidence="1">Cytoplasm</location>
    </subcellularLocation>
</comment>
<comment type="domain">
    <text evidence="1">Consists of two distinct domains, a catalytic core and a N-terminal extension that is involved in tRNA binding.</text>
</comment>
<comment type="similarity">
    <text evidence="1">Belongs to the class-II aminoacyl-tRNA synthetase family. Type-1 seryl-tRNA synthetase subfamily.</text>
</comment>
<organism>
    <name type="scientific">Acidovorax sp. (strain JS42)</name>
    <dbReference type="NCBI Taxonomy" id="232721"/>
    <lineage>
        <taxon>Bacteria</taxon>
        <taxon>Pseudomonadati</taxon>
        <taxon>Pseudomonadota</taxon>
        <taxon>Betaproteobacteria</taxon>
        <taxon>Burkholderiales</taxon>
        <taxon>Comamonadaceae</taxon>
        <taxon>Acidovorax</taxon>
    </lineage>
</organism>
<evidence type="ECO:0000255" key="1">
    <source>
        <dbReference type="HAMAP-Rule" id="MF_00176"/>
    </source>
</evidence>
<gene>
    <name evidence="1" type="primary">serS</name>
    <name type="ordered locus">Ajs_3445</name>
</gene>
<feature type="chain" id="PRO_1000019602" description="Serine--tRNA ligase">
    <location>
        <begin position="1"/>
        <end position="442"/>
    </location>
</feature>
<feature type="binding site" evidence="1">
    <location>
        <begin position="249"/>
        <end position="251"/>
    </location>
    <ligand>
        <name>L-serine</name>
        <dbReference type="ChEBI" id="CHEBI:33384"/>
    </ligand>
</feature>
<feature type="binding site" evidence="1">
    <location>
        <begin position="280"/>
        <end position="282"/>
    </location>
    <ligand>
        <name>ATP</name>
        <dbReference type="ChEBI" id="CHEBI:30616"/>
    </ligand>
</feature>
<feature type="binding site" evidence="1">
    <location>
        <position position="303"/>
    </location>
    <ligand>
        <name>L-serine</name>
        <dbReference type="ChEBI" id="CHEBI:33384"/>
    </ligand>
</feature>
<feature type="binding site" evidence="1">
    <location>
        <begin position="367"/>
        <end position="370"/>
    </location>
    <ligand>
        <name>ATP</name>
        <dbReference type="ChEBI" id="CHEBI:30616"/>
    </ligand>
</feature>
<feature type="binding site" evidence="1">
    <location>
        <position position="402"/>
    </location>
    <ligand>
        <name>L-serine</name>
        <dbReference type="ChEBI" id="CHEBI:33384"/>
    </ligand>
</feature>